<sequence length="453" mass="50263">MSPQTETKAGVGFKAGVKEYKLTYYTPEYETKDTDILAAFRVTPQPGVPPEERGAAVAAESSTGTWTTVWTDGLTSLDRYKGRCYHIEPVPGEEDQFIAYVAYPLDLFEEGSVTNMFTSIVGNVFGFKALRALRLEDLRIPVAYVKTFQGPPHGIQVERDKLNKYGRPLLGCTIKPKLGLSAKNYGRAVYECLRGGLDFTKDDENVNSQPFMRWRDRFLFCAEAIYKSQAETGEIKGHYLNATAGTCEEMIKRAVFARELGVPIVMHDYLTGGFTANTSLSHYCRDNGLLLHIHRAMHAVIDRQKNHGMHFRVLAKALRMSGGDHIHSGTVVGKLEGERDITLGFVDLLRDDYIEKDRSRGIYFTQDWVSLPGVLPVASRGIHVWHMPALTEIFGDDSVLQFGGGTLGHPWGNAPGAVANRVALEACVKARNEGRDLAAEGGEIIREACKWSP</sequence>
<gene>
    <name evidence="1" type="primary">rbcL</name>
</gene>
<comment type="function">
    <text evidence="1">RuBisCO catalyzes two reactions: the carboxylation of D-ribulose 1,5-bisphosphate, the primary event in carbon dioxide fixation, as well as the oxidative fragmentation of the pentose substrate in the photorespiration process. Both reactions occur simultaneously and in competition at the same active site.</text>
</comment>
<comment type="catalytic activity">
    <reaction evidence="1">
        <text>2 (2R)-3-phosphoglycerate + 2 H(+) = D-ribulose 1,5-bisphosphate + CO2 + H2O</text>
        <dbReference type="Rhea" id="RHEA:23124"/>
        <dbReference type="ChEBI" id="CHEBI:15377"/>
        <dbReference type="ChEBI" id="CHEBI:15378"/>
        <dbReference type="ChEBI" id="CHEBI:16526"/>
        <dbReference type="ChEBI" id="CHEBI:57870"/>
        <dbReference type="ChEBI" id="CHEBI:58272"/>
        <dbReference type="EC" id="4.1.1.39"/>
    </reaction>
</comment>
<comment type="catalytic activity">
    <reaction evidence="1">
        <text>D-ribulose 1,5-bisphosphate + O2 = 2-phosphoglycolate + (2R)-3-phosphoglycerate + 2 H(+)</text>
        <dbReference type="Rhea" id="RHEA:36631"/>
        <dbReference type="ChEBI" id="CHEBI:15378"/>
        <dbReference type="ChEBI" id="CHEBI:15379"/>
        <dbReference type="ChEBI" id="CHEBI:57870"/>
        <dbReference type="ChEBI" id="CHEBI:58033"/>
        <dbReference type="ChEBI" id="CHEBI:58272"/>
    </reaction>
</comment>
<comment type="cofactor">
    <cofactor evidence="1">
        <name>Mg(2+)</name>
        <dbReference type="ChEBI" id="CHEBI:18420"/>
    </cofactor>
    <text evidence="1">Binds 1 Mg(2+) ion per subunit.</text>
</comment>
<comment type="subunit">
    <text evidence="1">Heterohexadecamer of 8 large chains and 8 small chains; disulfide-linked. The disulfide link is formed within the large subunit homodimers.</text>
</comment>
<comment type="subcellular location">
    <subcellularLocation>
        <location>Plastid</location>
        <location>Chloroplast</location>
    </subcellularLocation>
</comment>
<comment type="PTM">
    <text evidence="1">The disulfide bond which can form in the large chain dimeric partners within the hexadecamer appears to be associated with oxidative stress and protein turnover.</text>
</comment>
<comment type="miscellaneous">
    <text evidence="1">The basic functional RuBisCO is composed of a large chain homodimer in a 'head-to-tail' conformation. In form I RuBisCO this homodimer is arranged in a barrel-like tetramer with the small subunits forming a tetrameric 'cap' on each end of the 'barrel'.</text>
</comment>
<comment type="similarity">
    <text evidence="1">Belongs to the RuBisCO large chain family. Type I subfamily.</text>
</comment>
<protein>
    <recommendedName>
        <fullName evidence="1">Ribulose bisphosphate carboxylase large chain</fullName>
        <shortName evidence="1">RuBisCO large subunit</shortName>
        <ecNumber evidence="1">4.1.1.39</ecNumber>
    </recommendedName>
</protein>
<dbReference type="EC" id="4.1.1.39" evidence="1"/>
<dbReference type="EMBL" id="X81101">
    <property type="protein sequence ID" value="CAA57007.1"/>
    <property type="molecule type" value="Genomic_DNA"/>
</dbReference>
<dbReference type="PIR" id="S47232">
    <property type="entry name" value="S47232"/>
</dbReference>
<dbReference type="SMR" id="Q32345"/>
<dbReference type="GO" id="GO:0009507">
    <property type="term" value="C:chloroplast"/>
    <property type="evidence" value="ECO:0007669"/>
    <property type="project" value="UniProtKB-SubCell"/>
</dbReference>
<dbReference type="GO" id="GO:0000287">
    <property type="term" value="F:magnesium ion binding"/>
    <property type="evidence" value="ECO:0007669"/>
    <property type="project" value="InterPro"/>
</dbReference>
<dbReference type="GO" id="GO:0004497">
    <property type="term" value="F:monooxygenase activity"/>
    <property type="evidence" value="ECO:0007669"/>
    <property type="project" value="UniProtKB-KW"/>
</dbReference>
<dbReference type="GO" id="GO:0016984">
    <property type="term" value="F:ribulose-bisphosphate carboxylase activity"/>
    <property type="evidence" value="ECO:0007669"/>
    <property type="project" value="UniProtKB-EC"/>
</dbReference>
<dbReference type="GO" id="GO:0009853">
    <property type="term" value="P:photorespiration"/>
    <property type="evidence" value="ECO:0007669"/>
    <property type="project" value="UniProtKB-KW"/>
</dbReference>
<dbReference type="GO" id="GO:0019253">
    <property type="term" value="P:reductive pentose-phosphate cycle"/>
    <property type="evidence" value="ECO:0007669"/>
    <property type="project" value="UniProtKB-KW"/>
</dbReference>
<dbReference type="CDD" id="cd08212">
    <property type="entry name" value="RuBisCO_large_I"/>
    <property type="match status" value="1"/>
</dbReference>
<dbReference type="FunFam" id="3.20.20.110:FF:000003">
    <property type="entry name" value="Ribulose bisphosphate carboxylase large chain"/>
    <property type="match status" value="1"/>
</dbReference>
<dbReference type="FunFam" id="3.30.70.150:FF:000001">
    <property type="entry name" value="Ribulose bisphosphate carboxylase large chain"/>
    <property type="match status" value="1"/>
</dbReference>
<dbReference type="Gene3D" id="3.20.20.110">
    <property type="entry name" value="Ribulose bisphosphate carboxylase, large subunit, C-terminal domain"/>
    <property type="match status" value="1"/>
</dbReference>
<dbReference type="Gene3D" id="3.30.70.150">
    <property type="entry name" value="RuBisCO large subunit, N-terminal domain"/>
    <property type="match status" value="1"/>
</dbReference>
<dbReference type="HAMAP" id="MF_01338">
    <property type="entry name" value="RuBisCO_L_type1"/>
    <property type="match status" value="1"/>
</dbReference>
<dbReference type="InterPro" id="IPR033966">
    <property type="entry name" value="RuBisCO"/>
</dbReference>
<dbReference type="InterPro" id="IPR020878">
    <property type="entry name" value="RuBisCo_large_chain_AS"/>
</dbReference>
<dbReference type="InterPro" id="IPR000685">
    <property type="entry name" value="RuBisCO_lsu_C"/>
</dbReference>
<dbReference type="InterPro" id="IPR036376">
    <property type="entry name" value="RuBisCO_lsu_C_sf"/>
</dbReference>
<dbReference type="InterPro" id="IPR017443">
    <property type="entry name" value="RuBisCO_lsu_fd_N"/>
</dbReference>
<dbReference type="InterPro" id="IPR036422">
    <property type="entry name" value="RuBisCO_lsu_N_sf"/>
</dbReference>
<dbReference type="InterPro" id="IPR020888">
    <property type="entry name" value="RuBisCO_lsuI"/>
</dbReference>
<dbReference type="NCBIfam" id="NF003252">
    <property type="entry name" value="PRK04208.1"/>
    <property type="match status" value="1"/>
</dbReference>
<dbReference type="PANTHER" id="PTHR42704">
    <property type="entry name" value="RIBULOSE BISPHOSPHATE CARBOXYLASE"/>
    <property type="match status" value="1"/>
</dbReference>
<dbReference type="PANTHER" id="PTHR42704:SF15">
    <property type="entry name" value="RIBULOSE BISPHOSPHATE CARBOXYLASE LARGE CHAIN"/>
    <property type="match status" value="1"/>
</dbReference>
<dbReference type="Pfam" id="PF00016">
    <property type="entry name" value="RuBisCO_large"/>
    <property type="match status" value="1"/>
</dbReference>
<dbReference type="Pfam" id="PF02788">
    <property type="entry name" value="RuBisCO_large_N"/>
    <property type="match status" value="1"/>
</dbReference>
<dbReference type="SFLD" id="SFLDG01052">
    <property type="entry name" value="RuBisCO"/>
    <property type="match status" value="1"/>
</dbReference>
<dbReference type="SFLD" id="SFLDS00014">
    <property type="entry name" value="RuBisCO"/>
    <property type="match status" value="1"/>
</dbReference>
<dbReference type="SFLD" id="SFLDG00301">
    <property type="entry name" value="RuBisCO-like_proteins"/>
    <property type="match status" value="1"/>
</dbReference>
<dbReference type="SUPFAM" id="SSF51649">
    <property type="entry name" value="RuBisCo, C-terminal domain"/>
    <property type="match status" value="1"/>
</dbReference>
<dbReference type="SUPFAM" id="SSF54966">
    <property type="entry name" value="RuBisCO, large subunit, small (N-terminal) domain"/>
    <property type="match status" value="1"/>
</dbReference>
<dbReference type="PROSITE" id="PS00157">
    <property type="entry name" value="RUBISCO_LARGE"/>
    <property type="match status" value="1"/>
</dbReference>
<proteinExistence type="inferred from homology"/>
<evidence type="ECO:0000255" key="1">
    <source>
        <dbReference type="HAMAP-Rule" id="MF_01338"/>
    </source>
</evidence>
<reference key="1">
    <citation type="journal article" date="1995" name="J. Mol. Evol.">
        <title>Comparison of the evolution of ribulose-1, 5-biphosphate carboxylase (rbcL) and atpB-rbcL noncoding spacer sequences in a recent plant group, the tribe Rubieae (Rubiaceae).</title>
        <authorList>
            <person name="Manen J.F."/>
            <person name="Natali A."/>
        </authorList>
    </citation>
    <scope>NUCLEOTIDE SEQUENCE [GENOMIC DNA]</scope>
</reference>
<organism>
    <name type="scientific">Galium palustre</name>
    <name type="common">Common marsh bedstraw</name>
    <name type="synonym">Rubia palustris</name>
    <dbReference type="NCBI Taxonomy" id="29793"/>
    <lineage>
        <taxon>Eukaryota</taxon>
        <taxon>Viridiplantae</taxon>
        <taxon>Streptophyta</taxon>
        <taxon>Embryophyta</taxon>
        <taxon>Tracheophyta</taxon>
        <taxon>Spermatophyta</taxon>
        <taxon>Magnoliopsida</taxon>
        <taxon>eudicotyledons</taxon>
        <taxon>Gunneridae</taxon>
        <taxon>Pentapetalae</taxon>
        <taxon>asterids</taxon>
        <taxon>lamiids</taxon>
        <taxon>Gentianales</taxon>
        <taxon>Rubiaceae</taxon>
        <taxon>Rubioideae</taxon>
        <taxon>Rubieae</taxon>
        <taxon>Galium</taxon>
    </lineage>
</organism>
<keyword id="KW-0007">Acetylation</keyword>
<keyword id="KW-0113">Calvin cycle</keyword>
<keyword id="KW-0120">Carbon dioxide fixation</keyword>
<keyword id="KW-0150">Chloroplast</keyword>
<keyword id="KW-1015">Disulfide bond</keyword>
<keyword id="KW-0456">Lyase</keyword>
<keyword id="KW-0460">Magnesium</keyword>
<keyword id="KW-0479">Metal-binding</keyword>
<keyword id="KW-0488">Methylation</keyword>
<keyword id="KW-0503">Monooxygenase</keyword>
<keyword id="KW-0560">Oxidoreductase</keyword>
<keyword id="KW-0601">Photorespiration</keyword>
<keyword id="KW-0602">Photosynthesis</keyword>
<keyword id="KW-0934">Plastid</keyword>
<feature type="propeptide" id="PRO_0000031235" evidence="1">
    <location>
        <begin position="1"/>
        <end position="2"/>
    </location>
</feature>
<feature type="chain" id="PRO_0000031236" description="Ribulose bisphosphate carboxylase large chain">
    <location>
        <begin position="3"/>
        <end position="453" status="greater than"/>
    </location>
</feature>
<feature type="active site" description="Proton acceptor" evidence="1">
    <location>
        <position position="175"/>
    </location>
</feature>
<feature type="active site" description="Proton acceptor" evidence="1">
    <location>
        <position position="294"/>
    </location>
</feature>
<feature type="binding site" description="in homodimeric partner" evidence="1">
    <location>
        <position position="123"/>
    </location>
    <ligand>
        <name>substrate</name>
    </ligand>
</feature>
<feature type="binding site" evidence="1">
    <location>
        <position position="173"/>
    </location>
    <ligand>
        <name>substrate</name>
    </ligand>
</feature>
<feature type="binding site" evidence="1">
    <location>
        <position position="177"/>
    </location>
    <ligand>
        <name>substrate</name>
    </ligand>
</feature>
<feature type="binding site" description="via carbamate group" evidence="1">
    <location>
        <position position="201"/>
    </location>
    <ligand>
        <name>Mg(2+)</name>
        <dbReference type="ChEBI" id="CHEBI:18420"/>
    </ligand>
</feature>
<feature type="binding site" evidence="1">
    <location>
        <position position="203"/>
    </location>
    <ligand>
        <name>Mg(2+)</name>
        <dbReference type="ChEBI" id="CHEBI:18420"/>
    </ligand>
</feature>
<feature type="binding site" evidence="1">
    <location>
        <position position="204"/>
    </location>
    <ligand>
        <name>Mg(2+)</name>
        <dbReference type="ChEBI" id="CHEBI:18420"/>
    </ligand>
</feature>
<feature type="binding site" evidence="1">
    <location>
        <position position="295"/>
    </location>
    <ligand>
        <name>substrate</name>
    </ligand>
</feature>
<feature type="binding site" evidence="1">
    <location>
        <position position="327"/>
    </location>
    <ligand>
        <name>substrate</name>
    </ligand>
</feature>
<feature type="binding site" evidence="1">
    <location>
        <position position="379"/>
    </location>
    <ligand>
        <name>substrate</name>
    </ligand>
</feature>
<feature type="site" description="Transition state stabilizer" evidence="1">
    <location>
        <position position="334"/>
    </location>
</feature>
<feature type="modified residue" description="N-acetylproline" evidence="1">
    <location>
        <position position="3"/>
    </location>
</feature>
<feature type="modified residue" description="N6,N6,N6-trimethyllysine" evidence="1">
    <location>
        <position position="14"/>
    </location>
</feature>
<feature type="modified residue" description="N6-carboxylysine" evidence="1">
    <location>
        <position position="201"/>
    </location>
</feature>
<feature type="disulfide bond" description="Interchain; in linked form" evidence="1">
    <location>
        <position position="247"/>
    </location>
</feature>
<feature type="non-terminal residue">
    <location>
        <position position="453"/>
    </location>
</feature>
<name>RBL_GALPA</name>
<geneLocation type="chloroplast"/>
<accession>Q32345</accession>